<keyword id="KW-0298">Galactitol metabolism</keyword>
<reference key="1">
    <citation type="journal article" date="2009" name="PLoS Genet.">
        <title>Organised genome dynamics in the Escherichia coli species results in highly diverse adaptive paths.</title>
        <authorList>
            <person name="Touchon M."/>
            <person name="Hoede C."/>
            <person name="Tenaillon O."/>
            <person name="Barbe V."/>
            <person name="Baeriswyl S."/>
            <person name="Bidet P."/>
            <person name="Bingen E."/>
            <person name="Bonacorsi S."/>
            <person name="Bouchier C."/>
            <person name="Bouvet O."/>
            <person name="Calteau A."/>
            <person name="Chiapello H."/>
            <person name="Clermont O."/>
            <person name="Cruveiller S."/>
            <person name="Danchin A."/>
            <person name="Diard M."/>
            <person name="Dossat C."/>
            <person name="Karoui M.E."/>
            <person name="Frapy E."/>
            <person name="Garry L."/>
            <person name="Ghigo J.M."/>
            <person name="Gilles A.M."/>
            <person name="Johnson J."/>
            <person name="Le Bouguenec C."/>
            <person name="Lescat M."/>
            <person name="Mangenot S."/>
            <person name="Martinez-Jehanne V."/>
            <person name="Matic I."/>
            <person name="Nassif X."/>
            <person name="Oztas S."/>
            <person name="Petit M.A."/>
            <person name="Pichon C."/>
            <person name="Rouy Z."/>
            <person name="Ruf C.S."/>
            <person name="Schneider D."/>
            <person name="Tourret J."/>
            <person name="Vacherie B."/>
            <person name="Vallenet D."/>
            <person name="Medigue C."/>
            <person name="Rocha E.P.C."/>
            <person name="Denamur E."/>
        </authorList>
    </citation>
    <scope>NUCLEOTIDE SEQUENCE [LARGE SCALE GENOMIC DNA]</scope>
    <source>
        <strain>IAI39 / ExPEC</strain>
    </source>
</reference>
<evidence type="ECO:0000255" key="1">
    <source>
        <dbReference type="HAMAP-Rule" id="MF_01296"/>
    </source>
</evidence>
<dbReference type="EMBL" id="CU928164">
    <property type="protein sequence ID" value="CAR17059.1"/>
    <property type="molecule type" value="Genomic_DNA"/>
</dbReference>
<dbReference type="RefSeq" id="WP_000853854.1">
    <property type="nucleotide sequence ID" value="NC_011750.1"/>
</dbReference>
<dbReference type="RefSeq" id="YP_002406944.1">
    <property type="nucleotide sequence ID" value="NC_011750.1"/>
</dbReference>
<dbReference type="SMR" id="B7NPN8"/>
<dbReference type="STRING" id="585057.ECIAI39_0922"/>
<dbReference type="KEGG" id="ect:ECIAI39_0922"/>
<dbReference type="PATRIC" id="fig|585057.6.peg.972"/>
<dbReference type="HOGENOM" id="CLU_053334_0_0_6"/>
<dbReference type="UniPathway" id="UPA00704">
    <property type="reaction ID" value="UER00716"/>
</dbReference>
<dbReference type="Proteomes" id="UP000000749">
    <property type="component" value="Chromosome"/>
</dbReference>
<dbReference type="GO" id="GO:0005886">
    <property type="term" value="C:plasma membrane"/>
    <property type="evidence" value="ECO:0007669"/>
    <property type="project" value="TreeGrafter"/>
</dbReference>
<dbReference type="GO" id="GO:2001059">
    <property type="term" value="P:D-tagatose 6-phosphate catabolic process"/>
    <property type="evidence" value="ECO:0007669"/>
    <property type="project" value="UniProtKB-UniRule"/>
</dbReference>
<dbReference type="GO" id="GO:0019402">
    <property type="term" value="P:galactitol metabolic process"/>
    <property type="evidence" value="ECO:0007669"/>
    <property type="project" value="UniProtKB-KW"/>
</dbReference>
<dbReference type="GO" id="GO:0009401">
    <property type="term" value="P:phosphoenolpyruvate-dependent sugar phosphotransferase system"/>
    <property type="evidence" value="ECO:0007669"/>
    <property type="project" value="TreeGrafter"/>
</dbReference>
<dbReference type="FunFam" id="3.20.20.70:FF:000141">
    <property type="entry name" value="D-tagatose-1,6-bisphosphate aldolase subunit GatZ"/>
    <property type="match status" value="1"/>
</dbReference>
<dbReference type="Gene3D" id="3.20.20.70">
    <property type="entry name" value="Aldolase class I"/>
    <property type="match status" value="1"/>
</dbReference>
<dbReference type="Gene3D" id="1.10.400.20">
    <property type="entry name" value="putative tagatose 6-phosphate kinase domain like"/>
    <property type="match status" value="1"/>
</dbReference>
<dbReference type="HAMAP" id="MF_01296">
    <property type="entry name" value="Tagatose_aldol_GatZ"/>
    <property type="match status" value="1"/>
</dbReference>
<dbReference type="InterPro" id="IPR013785">
    <property type="entry name" value="Aldolase_TIM"/>
</dbReference>
<dbReference type="InterPro" id="IPR012062">
    <property type="entry name" value="GatZ/KbaZ-like"/>
</dbReference>
<dbReference type="InterPro" id="IPR050303">
    <property type="entry name" value="GatZ_KbaZ_carbometab"/>
</dbReference>
<dbReference type="InterPro" id="IPR023436">
    <property type="entry name" value="TagBP_ald_GatZ"/>
</dbReference>
<dbReference type="NCBIfam" id="TIGR02810">
    <property type="entry name" value="agaZ_gatZ"/>
    <property type="match status" value="1"/>
</dbReference>
<dbReference type="NCBIfam" id="NF011626">
    <property type="entry name" value="PRK15052.1"/>
    <property type="match status" value="1"/>
</dbReference>
<dbReference type="PANTHER" id="PTHR32502:SF12">
    <property type="entry name" value="D-TAGATOSE-1,6-BISPHOSPHATE ALDOLASE SUBUNIT GATZ"/>
    <property type="match status" value="1"/>
</dbReference>
<dbReference type="PANTHER" id="PTHR32502">
    <property type="entry name" value="N-ACETYLGALACTOSAMINE PERMEASE II COMPONENT-RELATED"/>
    <property type="match status" value="1"/>
</dbReference>
<dbReference type="Pfam" id="PF08013">
    <property type="entry name" value="GatZ_KbaZ-like"/>
    <property type="match status" value="1"/>
</dbReference>
<dbReference type="PIRSF" id="PIRSF009264">
    <property type="entry name" value="TagBP_ald_AgaZ"/>
    <property type="match status" value="1"/>
</dbReference>
<dbReference type="SUPFAM" id="SSF51569">
    <property type="entry name" value="Aldolase"/>
    <property type="match status" value="1"/>
</dbReference>
<gene>
    <name evidence="1" type="primary">gatZ</name>
    <name type="ordered locus">ECIAI39_0922</name>
</gene>
<sequence length="420" mass="46828">MKTLIARHKAGEHIGICSVCSAHPLVIEAALAFDRNSTRKVLIEATSNQVNQFGGYTGMTPADFREFVFAIANKVGFARERIILGGDHLGPNCWQQENADAAMEKSVELVKAYVRAGFSKIHLDASMSCAGDPIPLAPETVAERAAVLCLAAESVATDCQREQLSYVIGTEVPVPGGEASAIQSVHITQVEDAANTLRTHQKAFIARGLAEALTRVIAIVVQPGVEFDHINIIHYQAQEAQALAQWIEKTKMVYEAHSTDYQTQAAYRELVRDHFAILKVGPALTFALREAVFALAQIEQELIAPENRSGCLAVIEEVMLDEPQYWKKYYRTGFHDSLLDIRYSLSDRIRYYWPHSRIKNSVETMMVNLEGVDIPLGMISQYLPKQFERIQSGELSAIPHQLIMDKIYDVLRAYRYGCAE</sequence>
<protein>
    <recommendedName>
        <fullName evidence="1">D-tagatose-1,6-bisphosphate aldolase subunit GatZ</fullName>
    </recommendedName>
</protein>
<name>GATZ_ECO7I</name>
<comment type="function">
    <text evidence="1">Component of the tagatose-1,6-bisphosphate aldolase GatYZ that is required for full activity and stability of the Y subunit. Could have a chaperone-like function for the proper and stable folding of GatY. When expressed alone, GatZ does not show any aldolase activity. Is involved in the catabolism of galactitol.</text>
</comment>
<comment type="pathway">
    <text evidence="1">Carbohydrate metabolism; D-tagatose 6-phosphate degradation; D-glyceraldehyde 3-phosphate and glycerone phosphate from D-tagatose 6-phosphate: step 2/2.</text>
</comment>
<comment type="subunit">
    <text evidence="1">Forms a complex with GatY.</text>
</comment>
<comment type="similarity">
    <text evidence="1">Belongs to the GatZ/KbaZ family. GatZ subfamily.</text>
</comment>
<proteinExistence type="inferred from homology"/>
<feature type="chain" id="PRO_0000372503" description="D-tagatose-1,6-bisphosphate aldolase subunit GatZ">
    <location>
        <begin position="1"/>
        <end position="420"/>
    </location>
</feature>
<accession>B7NPN8</accession>
<organism>
    <name type="scientific">Escherichia coli O7:K1 (strain IAI39 / ExPEC)</name>
    <dbReference type="NCBI Taxonomy" id="585057"/>
    <lineage>
        <taxon>Bacteria</taxon>
        <taxon>Pseudomonadati</taxon>
        <taxon>Pseudomonadota</taxon>
        <taxon>Gammaproteobacteria</taxon>
        <taxon>Enterobacterales</taxon>
        <taxon>Enterobacteriaceae</taxon>
        <taxon>Escherichia</taxon>
    </lineage>
</organism>